<keyword id="KW-0067">ATP-binding</keyword>
<keyword id="KW-0963">Cytoplasm</keyword>
<keyword id="KW-0324">Glycolysis</keyword>
<keyword id="KW-0418">Kinase</keyword>
<keyword id="KW-0547">Nucleotide-binding</keyword>
<keyword id="KW-0808">Transferase</keyword>
<accession>C1CCP3</accession>
<feature type="chain" id="PRO_1000192853" description="Phosphoglycerate kinase">
    <location>
        <begin position="1"/>
        <end position="398"/>
    </location>
</feature>
<feature type="binding site" evidence="1">
    <location>
        <begin position="21"/>
        <end position="23"/>
    </location>
    <ligand>
        <name>substrate</name>
    </ligand>
</feature>
<feature type="binding site" evidence="1">
    <location>
        <position position="36"/>
    </location>
    <ligand>
        <name>substrate</name>
    </ligand>
</feature>
<feature type="binding site" evidence="1">
    <location>
        <begin position="59"/>
        <end position="62"/>
    </location>
    <ligand>
        <name>substrate</name>
    </ligand>
</feature>
<feature type="binding site" evidence="1">
    <location>
        <position position="119"/>
    </location>
    <ligand>
        <name>substrate</name>
    </ligand>
</feature>
<feature type="binding site" evidence="1">
    <location>
        <position position="157"/>
    </location>
    <ligand>
        <name>substrate</name>
    </ligand>
</feature>
<feature type="binding site" evidence="1">
    <location>
        <position position="208"/>
    </location>
    <ligand>
        <name>ATP</name>
        <dbReference type="ChEBI" id="CHEBI:30616"/>
    </ligand>
</feature>
<feature type="binding site" evidence="1">
    <location>
        <position position="296"/>
    </location>
    <ligand>
        <name>ATP</name>
        <dbReference type="ChEBI" id="CHEBI:30616"/>
    </ligand>
</feature>
<feature type="binding site" evidence="1">
    <location>
        <position position="327"/>
    </location>
    <ligand>
        <name>ATP</name>
        <dbReference type="ChEBI" id="CHEBI:30616"/>
    </ligand>
</feature>
<feature type="binding site" evidence="1">
    <location>
        <begin position="354"/>
        <end position="357"/>
    </location>
    <ligand>
        <name>ATP</name>
        <dbReference type="ChEBI" id="CHEBI:30616"/>
    </ligand>
</feature>
<organism>
    <name type="scientific">Streptococcus pneumoniae (strain JJA)</name>
    <dbReference type="NCBI Taxonomy" id="488222"/>
    <lineage>
        <taxon>Bacteria</taxon>
        <taxon>Bacillati</taxon>
        <taxon>Bacillota</taxon>
        <taxon>Bacilli</taxon>
        <taxon>Lactobacillales</taxon>
        <taxon>Streptococcaceae</taxon>
        <taxon>Streptococcus</taxon>
    </lineage>
</organism>
<dbReference type="EC" id="2.7.2.3" evidence="1"/>
<dbReference type="EMBL" id="CP000919">
    <property type="protein sequence ID" value="ACO19793.1"/>
    <property type="molecule type" value="Genomic_DNA"/>
</dbReference>
<dbReference type="RefSeq" id="WP_001096743.1">
    <property type="nucleotide sequence ID" value="NC_012466.1"/>
</dbReference>
<dbReference type="SMR" id="C1CCP3"/>
<dbReference type="KEGG" id="sjj:SPJ_0468"/>
<dbReference type="HOGENOM" id="CLU_025427_0_1_9"/>
<dbReference type="UniPathway" id="UPA00109">
    <property type="reaction ID" value="UER00185"/>
</dbReference>
<dbReference type="Proteomes" id="UP000002206">
    <property type="component" value="Chromosome"/>
</dbReference>
<dbReference type="GO" id="GO:0005829">
    <property type="term" value="C:cytosol"/>
    <property type="evidence" value="ECO:0007669"/>
    <property type="project" value="TreeGrafter"/>
</dbReference>
<dbReference type="GO" id="GO:0043531">
    <property type="term" value="F:ADP binding"/>
    <property type="evidence" value="ECO:0007669"/>
    <property type="project" value="TreeGrafter"/>
</dbReference>
<dbReference type="GO" id="GO:0005524">
    <property type="term" value="F:ATP binding"/>
    <property type="evidence" value="ECO:0007669"/>
    <property type="project" value="UniProtKB-KW"/>
</dbReference>
<dbReference type="GO" id="GO:0004618">
    <property type="term" value="F:phosphoglycerate kinase activity"/>
    <property type="evidence" value="ECO:0007669"/>
    <property type="project" value="UniProtKB-UniRule"/>
</dbReference>
<dbReference type="GO" id="GO:0006094">
    <property type="term" value="P:gluconeogenesis"/>
    <property type="evidence" value="ECO:0007669"/>
    <property type="project" value="TreeGrafter"/>
</dbReference>
<dbReference type="GO" id="GO:0006096">
    <property type="term" value="P:glycolytic process"/>
    <property type="evidence" value="ECO:0007669"/>
    <property type="project" value="UniProtKB-UniRule"/>
</dbReference>
<dbReference type="FunFam" id="3.40.50.1260:FF:000001">
    <property type="entry name" value="Phosphoglycerate kinase"/>
    <property type="match status" value="1"/>
</dbReference>
<dbReference type="FunFam" id="3.40.50.1260:FF:000008">
    <property type="entry name" value="Phosphoglycerate kinase"/>
    <property type="match status" value="1"/>
</dbReference>
<dbReference type="Gene3D" id="3.40.50.1260">
    <property type="entry name" value="Phosphoglycerate kinase, N-terminal domain"/>
    <property type="match status" value="2"/>
</dbReference>
<dbReference type="HAMAP" id="MF_00145">
    <property type="entry name" value="Phosphoglyc_kinase"/>
    <property type="match status" value="1"/>
</dbReference>
<dbReference type="InterPro" id="IPR001576">
    <property type="entry name" value="Phosphoglycerate_kinase"/>
</dbReference>
<dbReference type="InterPro" id="IPR015911">
    <property type="entry name" value="Phosphoglycerate_kinase_CS"/>
</dbReference>
<dbReference type="InterPro" id="IPR015824">
    <property type="entry name" value="Phosphoglycerate_kinase_N"/>
</dbReference>
<dbReference type="InterPro" id="IPR036043">
    <property type="entry name" value="Phosphoglycerate_kinase_sf"/>
</dbReference>
<dbReference type="PANTHER" id="PTHR11406">
    <property type="entry name" value="PHOSPHOGLYCERATE KINASE"/>
    <property type="match status" value="1"/>
</dbReference>
<dbReference type="PANTHER" id="PTHR11406:SF23">
    <property type="entry name" value="PHOSPHOGLYCERATE KINASE 1, CHLOROPLASTIC-RELATED"/>
    <property type="match status" value="1"/>
</dbReference>
<dbReference type="Pfam" id="PF00162">
    <property type="entry name" value="PGK"/>
    <property type="match status" value="1"/>
</dbReference>
<dbReference type="PIRSF" id="PIRSF000724">
    <property type="entry name" value="Pgk"/>
    <property type="match status" value="1"/>
</dbReference>
<dbReference type="PRINTS" id="PR00477">
    <property type="entry name" value="PHGLYCKINASE"/>
</dbReference>
<dbReference type="SUPFAM" id="SSF53748">
    <property type="entry name" value="Phosphoglycerate kinase"/>
    <property type="match status" value="1"/>
</dbReference>
<dbReference type="PROSITE" id="PS00111">
    <property type="entry name" value="PGLYCERATE_KINASE"/>
    <property type="match status" value="1"/>
</dbReference>
<name>PGK_STRZJ</name>
<sequence length="398" mass="41923">MAKLTVKDVDLKGKKVLVRVDFNVPLKDGVITNDNRITAALPTIKYIIEQGGRAILFSHLGRVKEEADKAGKSLAPVAADLAAKLGQDVVFPGVTRGAELEAAINALEDGQVLLVENTRYEDVDGKKESKNDPELGKYWASLGDGIFVNDAFGTAHRAHASNVGISANVEKAVAGFLLENEIAYIQEAVETPERPFVAILGGSKVSDKIGVIENLLEKADKVLIGGGMTYTFYKAQGIEIGNSLVEEDKLDVAKALLEKANGKLILPVDSKEANAFAGYTEVRDTEGEAVSEGFLGLDIGPKSIAKFDEALTGAKTVVWNGPMGVFENPDFQAGTIGVMDAIVKQPGVKSIIGGGDSAAAAINLGRADKFSWISTGGGASMELLEGKVLPGLAALTEK</sequence>
<protein>
    <recommendedName>
        <fullName evidence="1">Phosphoglycerate kinase</fullName>
        <ecNumber evidence="1">2.7.2.3</ecNumber>
    </recommendedName>
</protein>
<proteinExistence type="inferred from homology"/>
<reference key="1">
    <citation type="journal article" date="2010" name="Genome Biol.">
        <title>Structure and dynamics of the pan-genome of Streptococcus pneumoniae and closely related species.</title>
        <authorList>
            <person name="Donati C."/>
            <person name="Hiller N.L."/>
            <person name="Tettelin H."/>
            <person name="Muzzi A."/>
            <person name="Croucher N.J."/>
            <person name="Angiuoli S.V."/>
            <person name="Oggioni M."/>
            <person name="Dunning Hotopp J.C."/>
            <person name="Hu F.Z."/>
            <person name="Riley D.R."/>
            <person name="Covacci A."/>
            <person name="Mitchell T.J."/>
            <person name="Bentley S.D."/>
            <person name="Kilian M."/>
            <person name="Ehrlich G.D."/>
            <person name="Rappuoli R."/>
            <person name="Moxon E.R."/>
            <person name="Masignani V."/>
        </authorList>
    </citation>
    <scope>NUCLEOTIDE SEQUENCE [LARGE SCALE GENOMIC DNA]</scope>
    <source>
        <strain>JJA</strain>
    </source>
</reference>
<comment type="catalytic activity">
    <reaction evidence="1">
        <text>(2R)-3-phosphoglycerate + ATP = (2R)-3-phospho-glyceroyl phosphate + ADP</text>
        <dbReference type="Rhea" id="RHEA:14801"/>
        <dbReference type="ChEBI" id="CHEBI:30616"/>
        <dbReference type="ChEBI" id="CHEBI:57604"/>
        <dbReference type="ChEBI" id="CHEBI:58272"/>
        <dbReference type="ChEBI" id="CHEBI:456216"/>
        <dbReference type="EC" id="2.7.2.3"/>
    </reaction>
</comment>
<comment type="pathway">
    <text evidence="1">Carbohydrate degradation; glycolysis; pyruvate from D-glyceraldehyde 3-phosphate: step 2/5.</text>
</comment>
<comment type="subunit">
    <text evidence="1">Monomer.</text>
</comment>
<comment type="subcellular location">
    <subcellularLocation>
        <location evidence="1">Cytoplasm</location>
    </subcellularLocation>
</comment>
<comment type="similarity">
    <text evidence="1">Belongs to the phosphoglycerate kinase family.</text>
</comment>
<evidence type="ECO:0000255" key="1">
    <source>
        <dbReference type="HAMAP-Rule" id="MF_00145"/>
    </source>
</evidence>
<gene>
    <name evidence="1" type="primary">pgk</name>
    <name type="ordered locus">SPJ_0468</name>
</gene>